<feature type="chain" id="PRO_0000320063" description="Large ribosomal subunit protein uL29">
    <location>
        <begin position="1"/>
        <end position="123"/>
    </location>
</feature>
<feature type="region of interest" description="Disordered" evidence="2">
    <location>
        <begin position="100"/>
        <end position="123"/>
    </location>
</feature>
<feature type="modified residue" description="N6-acetyllysine" evidence="1">
    <location>
        <position position="19"/>
    </location>
</feature>
<feature type="modified residue" description="Phosphoserine" evidence="1">
    <location>
        <position position="29"/>
    </location>
</feature>
<feature type="modified residue" description="N6-acetyllysine" evidence="1">
    <location>
        <position position="43"/>
    </location>
</feature>
<feature type="cross-link" description="Glycyl lysine isopeptide (Lys-Gly) (interchain with G-Cter in SUMO2)" evidence="1">
    <location>
        <position position="25"/>
    </location>
</feature>
<reference key="1">
    <citation type="journal article" date="2005" name="Science">
        <title>The transcriptional landscape of the mammalian genome.</title>
        <authorList>
            <person name="Carninci P."/>
            <person name="Kasukawa T."/>
            <person name="Katayama S."/>
            <person name="Gough J."/>
            <person name="Frith M.C."/>
            <person name="Maeda N."/>
            <person name="Oyama R."/>
            <person name="Ravasi T."/>
            <person name="Lenhard B."/>
            <person name="Wells C."/>
            <person name="Kodzius R."/>
            <person name="Shimokawa K."/>
            <person name="Bajic V.B."/>
            <person name="Brenner S.E."/>
            <person name="Batalov S."/>
            <person name="Forrest A.R."/>
            <person name="Zavolan M."/>
            <person name="Davis M.J."/>
            <person name="Wilming L.G."/>
            <person name="Aidinis V."/>
            <person name="Allen J.E."/>
            <person name="Ambesi-Impiombato A."/>
            <person name="Apweiler R."/>
            <person name="Aturaliya R.N."/>
            <person name="Bailey T.L."/>
            <person name="Bansal M."/>
            <person name="Baxter L."/>
            <person name="Beisel K.W."/>
            <person name="Bersano T."/>
            <person name="Bono H."/>
            <person name="Chalk A.M."/>
            <person name="Chiu K.P."/>
            <person name="Choudhary V."/>
            <person name="Christoffels A."/>
            <person name="Clutterbuck D.R."/>
            <person name="Crowe M.L."/>
            <person name="Dalla E."/>
            <person name="Dalrymple B.P."/>
            <person name="de Bono B."/>
            <person name="Della Gatta G."/>
            <person name="di Bernardo D."/>
            <person name="Down T."/>
            <person name="Engstrom P."/>
            <person name="Fagiolini M."/>
            <person name="Faulkner G."/>
            <person name="Fletcher C.F."/>
            <person name="Fukushima T."/>
            <person name="Furuno M."/>
            <person name="Futaki S."/>
            <person name="Gariboldi M."/>
            <person name="Georgii-Hemming P."/>
            <person name="Gingeras T.R."/>
            <person name="Gojobori T."/>
            <person name="Green R.E."/>
            <person name="Gustincich S."/>
            <person name="Harbers M."/>
            <person name="Hayashi Y."/>
            <person name="Hensch T.K."/>
            <person name="Hirokawa N."/>
            <person name="Hill D."/>
            <person name="Huminiecki L."/>
            <person name="Iacono M."/>
            <person name="Ikeo K."/>
            <person name="Iwama A."/>
            <person name="Ishikawa T."/>
            <person name="Jakt M."/>
            <person name="Kanapin A."/>
            <person name="Katoh M."/>
            <person name="Kawasawa Y."/>
            <person name="Kelso J."/>
            <person name="Kitamura H."/>
            <person name="Kitano H."/>
            <person name="Kollias G."/>
            <person name="Krishnan S.P."/>
            <person name="Kruger A."/>
            <person name="Kummerfeld S.K."/>
            <person name="Kurochkin I.V."/>
            <person name="Lareau L.F."/>
            <person name="Lazarevic D."/>
            <person name="Lipovich L."/>
            <person name="Liu J."/>
            <person name="Liuni S."/>
            <person name="McWilliam S."/>
            <person name="Madan Babu M."/>
            <person name="Madera M."/>
            <person name="Marchionni L."/>
            <person name="Matsuda H."/>
            <person name="Matsuzawa S."/>
            <person name="Miki H."/>
            <person name="Mignone F."/>
            <person name="Miyake S."/>
            <person name="Morris K."/>
            <person name="Mottagui-Tabar S."/>
            <person name="Mulder N."/>
            <person name="Nakano N."/>
            <person name="Nakauchi H."/>
            <person name="Ng P."/>
            <person name="Nilsson R."/>
            <person name="Nishiguchi S."/>
            <person name="Nishikawa S."/>
            <person name="Nori F."/>
            <person name="Ohara O."/>
            <person name="Okazaki Y."/>
            <person name="Orlando V."/>
            <person name="Pang K.C."/>
            <person name="Pavan W.J."/>
            <person name="Pavesi G."/>
            <person name="Pesole G."/>
            <person name="Petrovsky N."/>
            <person name="Piazza S."/>
            <person name="Reed J."/>
            <person name="Reid J.F."/>
            <person name="Ring B.Z."/>
            <person name="Ringwald M."/>
            <person name="Rost B."/>
            <person name="Ruan Y."/>
            <person name="Salzberg S.L."/>
            <person name="Sandelin A."/>
            <person name="Schneider C."/>
            <person name="Schoenbach C."/>
            <person name="Sekiguchi K."/>
            <person name="Semple C.A."/>
            <person name="Seno S."/>
            <person name="Sessa L."/>
            <person name="Sheng Y."/>
            <person name="Shibata Y."/>
            <person name="Shimada H."/>
            <person name="Shimada K."/>
            <person name="Silva D."/>
            <person name="Sinclair B."/>
            <person name="Sperling S."/>
            <person name="Stupka E."/>
            <person name="Sugiura K."/>
            <person name="Sultana R."/>
            <person name="Takenaka Y."/>
            <person name="Taki K."/>
            <person name="Tammoja K."/>
            <person name="Tan S.L."/>
            <person name="Tang S."/>
            <person name="Taylor M.S."/>
            <person name="Tegner J."/>
            <person name="Teichmann S.A."/>
            <person name="Ueda H.R."/>
            <person name="van Nimwegen E."/>
            <person name="Verardo R."/>
            <person name="Wei C.L."/>
            <person name="Yagi K."/>
            <person name="Yamanishi H."/>
            <person name="Zabarovsky E."/>
            <person name="Zhu S."/>
            <person name="Zimmer A."/>
            <person name="Hide W."/>
            <person name="Bult C."/>
            <person name="Grimmond S.M."/>
            <person name="Teasdale R.D."/>
            <person name="Liu E.T."/>
            <person name="Brusic V."/>
            <person name="Quackenbush J."/>
            <person name="Wahlestedt C."/>
            <person name="Mattick J.S."/>
            <person name="Hume D.A."/>
            <person name="Kai C."/>
            <person name="Sasaki D."/>
            <person name="Tomaru Y."/>
            <person name="Fukuda S."/>
            <person name="Kanamori-Katayama M."/>
            <person name="Suzuki M."/>
            <person name="Aoki J."/>
            <person name="Arakawa T."/>
            <person name="Iida J."/>
            <person name="Imamura K."/>
            <person name="Itoh M."/>
            <person name="Kato T."/>
            <person name="Kawaji H."/>
            <person name="Kawagashira N."/>
            <person name="Kawashima T."/>
            <person name="Kojima M."/>
            <person name="Kondo S."/>
            <person name="Konno H."/>
            <person name="Nakano K."/>
            <person name="Ninomiya N."/>
            <person name="Nishio T."/>
            <person name="Okada M."/>
            <person name="Plessy C."/>
            <person name="Shibata K."/>
            <person name="Shiraki T."/>
            <person name="Suzuki S."/>
            <person name="Tagami M."/>
            <person name="Waki K."/>
            <person name="Watahiki A."/>
            <person name="Okamura-Oho Y."/>
            <person name="Suzuki H."/>
            <person name="Kawai J."/>
            <person name="Hayashizaki Y."/>
        </authorList>
    </citation>
    <scope>NUCLEOTIDE SEQUENCE [LARGE SCALE MRNA]</scope>
    <source>
        <strain>C57BL/6J</strain>
        <strain>NOD</strain>
        <tissue>Bone marrow</tissue>
        <tissue>Thymus</tissue>
    </source>
</reference>
<reference key="2">
    <citation type="journal article" date="2009" name="PLoS Biol.">
        <title>Lineage-specific biology revealed by a finished genome assembly of the mouse.</title>
        <authorList>
            <person name="Church D.M."/>
            <person name="Goodstadt L."/>
            <person name="Hillier L.W."/>
            <person name="Zody M.C."/>
            <person name="Goldstein S."/>
            <person name="She X."/>
            <person name="Bult C.J."/>
            <person name="Agarwala R."/>
            <person name="Cherry J.L."/>
            <person name="DiCuccio M."/>
            <person name="Hlavina W."/>
            <person name="Kapustin Y."/>
            <person name="Meric P."/>
            <person name="Maglott D."/>
            <person name="Birtle Z."/>
            <person name="Marques A.C."/>
            <person name="Graves T."/>
            <person name="Zhou S."/>
            <person name="Teague B."/>
            <person name="Potamousis K."/>
            <person name="Churas C."/>
            <person name="Place M."/>
            <person name="Herschleb J."/>
            <person name="Runnheim R."/>
            <person name="Forrest D."/>
            <person name="Amos-Landgraf J."/>
            <person name="Schwartz D.C."/>
            <person name="Cheng Z."/>
            <person name="Lindblad-Toh K."/>
            <person name="Eichler E.E."/>
            <person name="Ponting C.P."/>
        </authorList>
    </citation>
    <scope>NUCLEOTIDE SEQUENCE [LARGE SCALE GENOMIC DNA]</scope>
    <source>
        <strain>C57BL/6J</strain>
    </source>
</reference>
<reference key="3">
    <citation type="journal article" date="2004" name="Genome Res.">
        <title>The status, quality, and expansion of the NIH full-length cDNA project: the Mammalian Gene Collection (MGC).</title>
        <authorList>
            <consortium name="The MGC Project Team"/>
        </authorList>
    </citation>
    <scope>NUCLEOTIDE SEQUENCE [LARGE SCALE MRNA]</scope>
    <source>
        <strain>C57BL/6J</strain>
        <tissue>Brain</tissue>
        <tissue>Mammary gland</tissue>
    </source>
</reference>
<reference key="4">
    <citation type="journal article" date="2010" name="Cell">
        <title>A tissue-specific atlas of mouse protein phosphorylation and expression.</title>
        <authorList>
            <person name="Huttlin E.L."/>
            <person name="Jedrychowski M.P."/>
            <person name="Elias J.E."/>
            <person name="Goswami T."/>
            <person name="Rad R."/>
            <person name="Beausoleil S.A."/>
            <person name="Villen J."/>
            <person name="Haas W."/>
            <person name="Sowa M.E."/>
            <person name="Gygi S.P."/>
        </authorList>
    </citation>
    <scope>IDENTIFICATION BY MASS SPECTROMETRY [LARGE SCALE ANALYSIS]</scope>
    <source>
        <tissue>Brain</tissue>
        <tissue>Brown adipose tissue</tissue>
        <tissue>Heart</tissue>
        <tissue>Kidney</tissue>
        <tissue>Liver</tissue>
        <tissue>Lung</tissue>
        <tissue>Pancreas</tissue>
        <tissue>Spleen</tissue>
        <tissue>Testis</tissue>
    </source>
</reference>
<reference evidence="5 6" key="5">
    <citation type="journal article" date="2022" name="Nature">
        <title>A male germ-cell-specific ribosome controls male fertility.</title>
        <authorList>
            <person name="Li H."/>
            <person name="Huo Y."/>
            <person name="He X."/>
            <person name="Yao L."/>
            <person name="Zhang H."/>
            <person name="Cui Y."/>
            <person name="Xiao H."/>
            <person name="Xie W."/>
            <person name="Zhang D."/>
            <person name="Wang Y."/>
            <person name="Zhang S."/>
            <person name="Tu H."/>
            <person name="Cheng Y."/>
            <person name="Guo Y."/>
            <person name="Cao X."/>
            <person name="Zhu Y."/>
            <person name="Jiang T."/>
            <person name="Guo X."/>
            <person name="Qin Y."/>
            <person name="Sha J."/>
        </authorList>
    </citation>
    <scope>STRUCTURE BY ELECTRON MICROSCOPY (3.03 ANGSTROMS) OF RIBOSOME</scope>
    <scope>FUNCTION</scope>
    <scope>SUBUNIT</scope>
    <scope>SUBCELLULAR LOCATION</scope>
</reference>
<evidence type="ECO:0000250" key="1">
    <source>
        <dbReference type="UniProtKB" id="P42766"/>
    </source>
</evidence>
<evidence type="ECO:0000256" key="2">
    <source>
        <dbReference type="SAM" id="MobiDB-lite"/>
    </source>
</evidence>
<evidence type="ECO:0000269" key="3">
    <source>
    </source>
</evidence>
<evidence type="ECO:0000305" key="4"/>
<evidence type="ECO:0007744" key="5">
    <source>
        <dbReference type="PDB" id="7CPU"/>
    </source>
</evidence>
<evidence type="ECO:0007744" key="6">
    <source>
        <dbReference type="PDB" id="7CPV"/>
    </source>
</evidence>
<organism>
    <name type="scientific">Mus musculus</name>
    <name type="common">Mouse</name>
    <dbReference type="NCBI Taxonomy" id="10090"/>
    <lineage>
        <taxon>Eukaryota</taxon>
        <taxon>Metazoa</taxon>
        <taxon>Chordata</taxon>
        <taxon>Craniata</taxon>
        <taxon>Vertebrata</taxon>
        <taxon>Euteleostomi</taxon>
        <taxon>Mammalia</taxon>
        <taxon>Eutheria</taxon>
        <taxon>Euarchontoglires</taxon>
        <taxon>Glires</taxon>
        <taxon>Rodentia</taxon>
        <taxon>Myomorpha</taxon>
        <taxon>Muroidea</taxon>
        <taxon>Muridae</taxon>
        <taxon>Murinae</taxon>
        <taxon>Mus</taxon>
        <taxon>Mus</taxon>
    </lineage>
</organism>
<keyword id="KW-0002">3D-structure</keyword>
<keyword id="KW-0007">Acetylation</keyword>
<keyword id="KW-0963">Cytoplasm</keyword>
<keyword id="KW-1017">Isopeptide bond</keyword>
<keyword id="KW-0597">Phosphoprotein</keyword>
<keyword id="KW-1185">Reference proteome</keyword>
<keyword id="KW-0687">Ribonucleoprotein</keyword>
<keyword id="KW-0689">Ribosomal protein</keyword>
<keyword id="KW-0832">Ubl conjugation</keyword>
<accession>Q6ZWV7</accession>
<sequence length="123" mass="14553">MAKIKARDLRGKKKEELLKQLDDLKVELSQLRVAKVTGGAASKLSKIRVVRKSIARVLTVINQTQKENLRKFYKGKKYKPLDLRPKKTRAMRRRLTKHEEKLKTKKQQRKERLYPLRKYAVKA</sequence>
<gene>
    <name type="primary">Rpl35</name>
</gene>
<comment type="function">
    <text evidence="3">Component of the large ribosomal subunit (PubMed:36517592). The ribosome is a large ribonucleoprotein complex responsible for the synthesis of proteins in the cell (PubMed:36517592).</text>
</comment>
<comment type="subunit">
    <text evidence="3">Component of the large ribosomal subunit.</text>
</comment>
<comment type="subcellular location">
    <subcellularLocation>
        <location evidence="3">Cytoplasm</location>
    </subcellularLocation>
</comment>
<comment type="similarity">
    <text evidence="4">Belongs to the universal ribosomal protein uL29 family.</text>
</comment>
<name>RL35_MOUSE</name>
<proteinExistence type="evidence at protein level"/>
<dbReference type="EMBL" id="AK010639">
    <property type="protein sequence ID" value="BAB27082.1"/>
    <property type="molecule type" value="mRNA"/>
</dbReference>
<dbReference type="EMBL" id="AK012335">
    <property type="protein sequence ID" value="BAB28169.1"/>
    <property type="molecule type" value="mRNA"/>
</dbReference>
<dbReference type="EMBL" id="AK151707">
    <property type="protein sequence ID" value="BAE30629.1"/>
    <property type="molecule type" value="mRNA"/>
</dbReference>
<dbReference type="EMBL" id="AK169650">
    <property type="protein sequence ID" value="BAE41274.1"/>
    <property type="molecule type" value="mRNA"/>
</dbReference>
<dbReference type="EMBL" id="AL844588">
    <property type="status" value="NOT_ANNOTATED_CDS"/>
    <property type="molecule type" value="Genomic_DNA"/>
</dbReference>
<dbReference type="EMBL" id="BC094634">
    <property type="protein sequence ID" value="AAH94634.1"/>
    <property type="molecule type" value="mRNA"/>
</dbReference>
<dbReference type="EMBL" id="BC125652">
    <property type="protein sequence ID" value="AAI25653.1"/>
    <property type="molecule type" value="mRNA"/>
</dbReference>
<dbReference type="EMBL" id="BC125656">
    <property type="protein sequence ID" value="AAI25657.1"/>
    <property type="molecule type" value="mRNA"/>
</dbReference>
<dbReference type="CCDS" id="CCDS16015.1"/>
<dbReference type="RefSeq" id="NP_079868.1">
    <property type="nucleotide sequence ID" value="NM_025592.3"/>
</dbReference>
<dbReference type="PDB" id="6SWA">
    <property type="method" value="EM"/>
    <property type="resolution" value="3.10 A"/>
    <property type="chains" value="f=1-123"/>
</dbReference>
<dbReference type="PDB" id="7CPU">
    <property type="method" value="EM"/>
    <property type="resolution" value="2.82 A"/>
    <property type="chains" value="Lh=1-123"/>
</dbReference>
<dbReference type="PDB" id="7CPV">
    <property type="method" value="EM"/>
    <property type="resolution" value="3.03 A"/>
    <property type="chains" value="Lh=1-123"/>
</dbReference>
<dbReference type="PDB" id="7LS1">
    <property type="method" value="EM"/>
    <property type="resolution" value="3.30 A"/>
    <property type="chains" value="b2=1-123"/>
</dbReference>
<dbReference type="PDB" id="7LS2">
    <property type="method" value="EM"/>
    <property type="resolution" value="3.10 A"/>
    <property type="chains" value="b2=1-123"/>
</dbReference>
<dbReference type="PDBsum" id="6SWA"/>
<dbReference type="PDBsum" id="7CPU"/>
<dbReference type="PDBsum" id="7CPV"/>
<dbReference type="PDBsum" id="7LS1"/>
<dbReference type="PDBsum" id="7LS2"/>
<dbReference type="EMDB" id="EMD-10321"/>
<dbReference type="EMDB" id="EMD-23500"/>
<dbReference type="EMDB" id="EMD-23501"/>
<dbReference type="EMDB" id="EMD-30432"/>
<dbReference type="EMDB" id="EMD-30433"/>
<dbReference type="SMR" id="Q6ZWV7"/>
<dbReference type="BioGRID" id="211511">
    <property type="interactions" value="330"/>
</dbReference>
<dbReference type="ComplexPortal" id="CPX-5262">
    <property type="entry name" value="60S cytosolic large ribosomal subunit"/>
</dbReference>
<dbReference type="ComplexPortal" id="CPX-7662">
    <property type="entry name" value="60S cytosolic large ribosomal subunit, testis-specific variant"/>
</dbReference>
<dbReference type="ComplexPortal" id="CPX-7663">
    <property type="entry name" value="60S cytosolic large ribosomal subunit, striated muscle variant"/>
</dbReference>
<dbReference type="FunCoup" id="Q6ZWV7">
    <property type="interactions" value="1728"/>
</dbReference>
<dbReference type="IntAct" id="Q6ZWV7">
    <property type="interactions" value="256"/>
</dbReference>
<dbReference type="MINT" id="Q6ZWV7"/>
<dbReference type="STRING" id="10090.ENSMUSP00000079672"/>
<dbReference type="GlyGen" id="Q6ZWV7">
    <property type="glycosylation" value="1 site, 1 O-linked glycan (1 site)"/>
</dbReference>
<dbReference type="iPTMnet" id="Q6ZWV7"/>
<dbReference type="PhosphoSitePlus" id="Q6ZWV7"/>
<dbReference type="jPOST" id="Q6ZWV7"/>
<dbReference type="PaxDb" id="10090-ENSMUSP00000079672"/>
<dbReference type="PeptideAtlas" id="Q6ZWV7"/>
<dbReference type="ProteomicsDB" id="253301"/>
<dbReference type="Pumba" id="Q6ZWV7"/>
<dbReference type="TopDownProteomics" id="Q6ZWV7"/>
<dbReference type="DNASU" id="66489"/>
<dbReference type="Ensembl" id="ENSMUST00000080861.6">
    <property type="protein sequence ID" value="ENSMUSP00000079672.6"/>
    <property type="gene ID" value="ENSMUSG00000062997.7"/>
</dbReference>
<dbReference type="Ensembl" id="ENSMUST00000102782.4">
    <property type="protein sequence ID" value="ENSMUSP00000099843.4"/>
    <property type="gene ID" value="ENSMUSG00000078193.3"/>
</dbReference>
<dbReference type="GeneID" id="66489"/>
<dbReference type="KEGG" id="mmu:66489"/>
<dbReference type="UCSC" id="uc008jnz.1">
    <property type="organism name" value="mouse"/>
</dbReference>
<dbReference type="AGR" id="MGI:1913739"/>
<dbReference type="AGR" id="MGI:3780170"/>
<dbReference type="CTD" id="11224"/>
<dbReference type="MGI" id="MGI:1913739">
    <property type="gene designation" value="Rpl35"/>
</dbReference>
<dbReference type="VEuPathDB" id="HostDB:ENSMUSG00000062997"/>
<dbReference type="VEuPathDB" id="HostDB:ENSMUSG00000078193"/>
<dbReference type="eggNOG" id="KOG3436">
    <property type="taxonomic scope" value="Eukaryota"/>
</dbReference>
<dbReference type="GeneTree" id="ENSGT00390000016384"/>
<dbReference type="HOGENOM" id="CLU_110381_1_1_1"/>
<dbReference type="InParanoid" id="Q6ZWV7"/>
<dbReference type="OMA" id="VMNQKAR"/>
<dbReference type="OrthoDB" id="528635at2759"/>
<dbReference type="PhylomeDB" id="Q6ZWV7"/>
<dbReference type="TreeFam" id="TF314951"/>
<dbReference type="Reactome" id="R-MMU-156827">
    <property type="pathway name" value="L13a-mediated translational silencing of Ceruloplasmin expression"/>
</dbReference>
<dbReference type="Reactome" id="R-MMU-1799339">
    <property type="pathway name" value="SRP-dependent cotranslational protein targeting to membrane"/>
</dbReference>
<dbReference type="Reactome" id="R-MMU-6791226">
    <property type="pathway name" value="Major pathway of rRNA processing in the nucleolus and cytosol"/>
</dbReference>
<dbReference type="Reactome" id="R-MMU-72689">
    <property type="pathway name" value="Formation of a pool of free 40S subunits"/>
</dbReference>
<dbReference type="Reactome" id="R-MMU-72706">
    <property type="pathway name" value="GTP hydrolysis and joining of the 60S ribosomal subunit"/>
</dbReference>
<dbReference type="Reactome" id="R-MMU-975956">
    <property type="pathway name" value="Nonsense Mediated Decay (NMD) independent of the Exon Junction Complex (EJC)"/>
</dbReference>
<dbReference type="Reactome" id="R-MMU-975957">
    <property type="pathway name" value="Nonsense Mediated Decay (NMD) enhanced by the Exon Junction Complex (EJC)"/>
</dbReference>
<dbReference type="BioGRID-ORCS" id="66489">
    <property type="hits" value="24 hits in 63 CRISPR screens"/>
</dbReference>
<dbReference type="CD-CODE" id="CE726F99">
    <property type="entry name" value="Postsynaptic density"/>
</dbReference>
<dbReference type="ChiTaRS" id="Rpl35">
    <property type="organism name" value="mouse"/>
</dbReference>
<dbReference type="PRO" id="PR:Q6ZWV7"/>
<dbReference type="Proteomes" id="UP000000589">
    <property type="component" value="Chromosome 1"/>
</dbReference>
<dbReference type="Proteomes" id="UP000000589">
    <property type="component" value="Chromosome 2"/>
</dbReference>
<dbReference type="RNAct" id="Q6ZWV7">
    <property type="molecule type" value="protein"/>
</dbReference>
<dbReference type="Bgee" id="ENSMUSG00000062997">
    <property type="expression patterns" value="Expressed in urinary bladder and 68 other cell types or tissues"/>
</dbReference>
<dbReference type="GO" id="GO:0005737">
    <property type="term" value="C:cytoplasm"/>
    <property type="evidence" value="ECO:0000314"/>
    <property type="project" value="ComplexPortal"/>
</dbReference>
<dbReference type="GO" id="GO:0005829">
    <property type="term" value="C:cytosol"/>
    <property type="evidence" value="ECO:0000304"/>
    <property type="project" value="Reactome"/>
</dbReference>
<dbReference type="GO" id="GO:0022625">
    <property type="term" value="C:cytosolic large ribosomal subunit"/>
    <property type="evidence" value="ECO:0000314"/>
    <property type="project" value="UniProtKB"/>
</dbReference>
<dbReference type="GO" id="GO:0098794">
    <property type="term" value="C:postsynapse"/>
    <property type="evidence" value="ECO:0000303"/>
    <property type="project" value="SynGO"/>
</dbReference>
<dbReference type="GO" id="GO:0098793">
    <property type="term" value="C:presynapse"/>
    <property type="evidence" value="ECO:0000303"/>
    <property type="project" value="SynGO"/>
</dbReference>
<dbReference type="GO" id="GO:0005840">
    <property type="term" value="C:ribosome"/>
    <property type="evidence" value="ECO:0000303"/>
    <property type="project" value="SynGO"/>
</dbReference>
<dbReference type="GO" id="GO:0045202">
    <property type="term" value="C:synapse"/>
    <property type="evidence" value="ECO:0000314"/>
    <property type="project" value="SynGO"/>
</dbReference>
<dbReference type="GO" id="GO:0003735">
    <property type="term" value="F:structural constituent of ribosome"/>
    <property type="evidence" value="ECO:0000314"/>
    <property type="project" value="UniProtKB"/>
</dbReference>
<dbReference type="GO" id="GO:0002181">
    <property type="term" value="P:cytoplasmic translation"/>
    <property type="evidence" value="ECO:0000303"/>
    <property type="project" value="ComplexPortal"/>
</dbReference>
<dbReference type="GO" id="GO:0000463">
    <property type="term" value="P:maturation of LSU-rRNA from tricistronic rRNA transcript (SSU-rRNA, 5.8S rRNA, LSU-rRNA)"/>
    <property type="evidence" value="ECO:0007669"/>
    <property type="project" value="InterPro"/>
</dbReference>
<dbReference type="GO" id="GO:0140242">
    <property type="term" value="P:translation at postsynapse"/>
    <property type="evidence" value="ECO:0000303"/>
    <property type="project" value="SynGO"/>
</dbReference>
<dbReference type="GO" id="GO:0140236">
    <property type="term" value="P:translation at presynapse"/>
    <property type="evidence" value="ECO:0000303"/>
    <property type="project" value="SynGO"/>
</dbReference>
<dbReference type="CDD" id="cd00427">
    <property type="entry name" value="Ribosomal_L29_HIP"/>
    <property type="match status" value="1"/>
</dbReference>
<dbReference type="FunFam" id="1.10.287.310:FF:000002">
    <property type="entry name" value="60S ribosomal protein L35"/>
    <property type="match status" value="1"/>
</dbReference>
<dbReference type="FunFam" id="6.10.250.3450:FF:000001">
    <property type="entry name" value="60S ribosomal protein L35"/>
    <property type="match status" value="1"/>
</dbReference>
<dbReference type="Gene3D" id="1.10.287.310">
    <property type="match status" value="1"/>
</dbReference>
<dbReference type="Gene3D" id="6.10.250.3450">
    <property type="match status" value="1"/>
</dbReference>
<dbReference type="HAMAP" id="MF_00374">
    <property type="entry name" value="Ribosomal_uL29"/>
    <property type="match status" value="1"/>
</dbReference>
<dbReference type="InterPro" id="IPR001854">
    <property type="entry name" value="Ribosomal_uL29"/>
</dbReference>
<dbReference type="InterPro" id="IPR018254">
    <property type="entry name" value="Ribosomal_uL29_CS"/>
</dbReference>
<dbReference type="InterPro" id="IPR045059">
    <property type="entry name" value="Ribosomal_uL29_euk"/>
</dbReference>
<dbReference type="InterPro" id="IPR036049">
    <property type="entry name" value="Ribosomal_uL29_sf"/>
</dbReference>
<dbReference type="NCBIfam" id="TIGR00012">
    <property type="entry name" value="L29"/>
    <property type="match status" value="1"/>
</dbReference>
<dbReference type="PANTHER" id="PTHR45722">
    <property type="entry name" value="60S RIBOSOMAL PROTEIN L35"/>
    <property type="match status" value="1"/>
</dbReference>
<dbReference type="PANTHER" id="PTHR45722:SF33">
    <property type="entry name" value="LARGE RIBOSOMAL SUBUNIT PROTEIN UL29"/>
    <property type="match status" value="1"/>
</dbReference>
<dbReference type="Pfam" id="PF00831">
    <property type="entry name" value="Ribosomal_L29"/>
    <property type="match status" value="1"/>
</dbReference>
<dbReference type="SUPFAM" id="SSF46561">
    <property type="entry name" value="Ribosomal protein L29 (L29p)"/>
    <property type="match status" value="1"/>
</dbReference>
<dbReference type="PROSITE" id="PS00579">
    <property type="entry name" value="RIBOSOMAL_L29"/>
    <property type="match status" value="1"/>
</dbReference>
<protein>
    <recommendedName>
        <fullName evidence="4">Large ribosomal subunit protein uL29</fullName>
    </recommendedName>
    <alternativeName>
        <fullName>60S ribosomal protein L35</fullName>
    </alternativeName>
</protein>